<gene>
    <name type="primary">tenA</name>
    <name type="ordered locus">SSP0789</name>
</gene>
<proteinExistence type="inferred from homology"/>
<feature type="chain" id="PRO_0000293618" description="Aminopyrimidine aminohydrolase">
    <location>
        <begin position="1"/>
        <end position="229"/>
    </location>
</feature>
<feature type="active site" description="Nucleophile" evidence="1">
    <location>
        <position position="137"/>
    </location>
</feature>
<feature type="active site" description="Proton donor" evidence="1">
    <location>
        <position position="208"/>
    </location>
</feature>
<feature type="binding site" evidence="1">
    <location>
        <position position="44"/>
    </location>
    <ligand>
        <name>substrate</name>
    </ligand>
</feature>
<feature type="binding site" evidence="1">
    <location>
        <position position="141"/>
    </location>
    <ligand>
        <name>substrate</name>
    </ligand>
</feature>
<feature type="binding site" evidence="1">
    <location>
        <position position="167"/>
    </location>
    <ligand>
        <name>substrate</name>
    </ligand>
</feature>
<feature type="site" description="Increases nucleophilicity of active site Cys" evidence="1">
    <location>
        <position position="47"/>
    </location>
</feature>
<organism>
    <name type="scientific">Staphylococcus saprophyticus subsp. saprophyticus (strain ATCC 15305 / DSM 20229 / NCIMB 8711 / NCTC 7292 / S-41)</name>
    <dbReference type="NCBI Taxonomy" id="342451"/>
    <lineage>
        <taxon>Bacteria</taxon>
        <taxon>Bacillati</taxon>
        <taxon>Bacillota</taxon>
        <taxon>Bacilli</taxon>
        <taxon>Bacillales</taxon>
        <taxon>Staphylococcaceae</taxon>
        <taxon>Staphylococcus</taxon>
    </lineage>
</organism>
<comment type="function">
    <text evidence="1 2">Catalyzes an amino-pyrimidine hydrolysis reaction at the C5' of the pyrimidine moiety of thiamine compounds, a reaction that is part of a thiamine salvage pathway. Thus, catalyzes the conversion of 4-amino-5-aminomethyl-2-methylpyrimidine to 4-amino-5-hydroxymethyl-2-methylpyrimidine (HMP). Is also able to catalyze the hydrolytic cleavage of thiamine; however, this thiaminase activity may not be physiologically relevant. Therefore, is probably involved in the regeneration of the thiamine pyrimidine from thiamine degraded products present in the environment, rather than in thiamine degradation.</text>
</comment>
<comment type="catalytic activity">
    <reaction evidence="1">
        <text>4-amino-5-aminomethyl-2-methylpyrimidine + H2O = 4-amino-5-hydroxymethyl-2-methylpyrimidine + NH4(+)</text>
        <dbReference type="Rhea" id="RHEA:31799"/>
        <dbReference type="ChEBI" id="CHEBI:15377"/>
        <dbReference type="ChEBI" id="CHEBI:16892"/>
        <dbReference type="ChEBI" id="CHEBI:28938"/>
        <dbReference type="ChEBI" id="CHEBI:63416"/>
        <dbReference type="EC" id="3.5.99.2"/>
    </reaction>
</comment>
<comment type="catalytic activity">
    <reaction evidence="2">
        <text>thiamine + H2O = 5-(2-hydroxyethyl)-4-methylthiazole + 4-amino-5-hydroxymethyl-2-methylpyrimidine + H(+)</text>
        <dbReference type="Rhea" id="RHEA:17509"/>
        <dbReference type="ChEBI" id="CHEBI:15377"/>
        <dbReference type="ChEBI" id="CHEBI:15378"/>
        <dbReference type="ChEBI" id="CHEBI:16892"/>
        <dbReference type="ChEBI" id="CHEBI:17957"/>
        <dbReference type="ChEBI" id="CHEBI:18385"/>
        <dbReference type="EC" id="3.5.99.2"/>
    </reaction>
</comment>
<comment type="pathway">
    <text evidence="1">Cofactor biosynthesis; thiamine diphosphate biosynthesis.</text>
</comment>
<comment type="subunit">
    <text evidence="2">Homotetramer.</text>
</comment>
<comment type="similarity">
    <text evidence="3">Belongs to the TenA family.</text>
</comment>
<accession>Q49Z42</accession>
<protein>
    <recommendedName>
        <fullName evidence="1">Aminopyrimidine aminohydrolase</fullName>
        <ecNumber evidence="2">3.5.99.2</ecNumber>
    </recommendedName>
    <alternativeName>
        <fullName evidence="2">Thiaminase II</fullName>
    </alternativeName>
</protein>
<sequence length="229" mass="26881">MLFSEQLKKEAKPIINQIYHDPFIQGMLHGNLPTEATKFYLRADASYLNEFANIYALLIPKMGNLNDVRFLVEQIQFIVDGEVEAHEILADYVQESYNEIVQEKVWPPSGDHYIKHMYFNAYAKENAAYTIAAMAPCPYVYQFIAQEALRDKELNKDSILAKWFEFYSTEMDELVIVFDNLMDKLTKHCSEKEKNEIKQCFLQSTVHERNFFNMSFNEESWSYGGMKNE</sequence>
<dbReference type="EC" id="3.5.99.2" evidence="2"/>
<dbReference type="EMBL" id="AP008934">
    <property type="protein sequence ID" value="BAE17934.1"/>
    <property type="molecule type" value="Genomic_DNA"/>
</dbReference>
<dbReference type="RefSeq" id="WP_011302686.1">
    <property type="nucleotide sequence ID" value="NC_007350.1"/>
</dbReference>
<dbReference type="SMR" id="Q49Z42"/>
<dbReference type="GeneID" id="3615756"/>
<dbReference type="KEGG" id="ssp:SSP0789"/>
<dbReference type="PATRIC" id="fig|342451.11.peg.791"/>
<dbReference type="eggNOG" id="COG0819">
    <property type="taxonomic scope" value="Bacteria"/>
</dbReference>
<dbReference type="HOGENOM" id="CLU_077537_3_1_9"/>
<dbReference type="OrthoDB" id="34166at2"/>
<dbReference type="UniPathway" id="UPA00060"/>
<dbReference type="Proteomes" id="UP000006371">
    <property type="component" value="Chromosome"/>
</dbReference>
<dbReference type="GO" id="GO:0005829">
    <property type="term" value="C:cytosol"/>
    <property type="evidence" value="ECO:0007669"/>
    <property type="project" value="TreeGrafter"/>
</dbReference>
<dbReference type="GO" id="GO:0050334">
    <property type="term" value="F:thiaminase activity"/>
    <property type="evidence" value="ECO:0007669"/>
    <property type="project" value="UniProtKB-EC"/>
</dbReference>
<dbReference type="GO" id="GO:0009228">
    <property type="term" value="P:thiamine biosynthetic process"/>
    <property type="evidence" value="ECO:0007669"/>
    <property type="project" value="UniProtKB-KW"/>
</dbReference>
<dbReference type="GO" id="GO:0009229">
    <property type="term" value="P:thiamine diphosphate biosynthetic process"/>
    <property type="evidence" value="ECO:0007669"/>
    <property type="project" value="UniProtKB-UniPathway"/>
</dbReference>
<dbReference type="CDD" id="cd19360">
    <property type="entry name" value="TenA_C_SaTenA-like"/>
    <property type="match status" value="1"/>
</dbReference>
<dbReference type="Gene3D" id="1.20.910.10">
    <property type="entry name" value="Heme oxygenase-like"/>
    <property type="match status" value="1"/>
</dbReference>
<dbReference type="InterPro" id="IPR016084">
    <property type="entry name" value="Haem_Oase-like_multi-hlx"/>
</dbReference>
<dbReference type="InterPro" id="IPR004305">
    <property type="entry name" value="Thiaminase-2/PQQC"/>
</dbReference>
<dbReference type="InterPro" id="IPR027574">
    <property type="entry name" value="Thiaminase_II"/>
</dbReference>
<dbReference type="InterPro" id="IPR050967">
    <property type="entry name" value="Thiamine_Salvage_TenA"/>
</dbReference>
<dbReference type="NCBIfam" id="TIGR04306">
    <property type="entry name" value="salvage_TenA"/>
    <property type="match status" value="1"/>
</dbReference>
<dbReference type="PANTHER" id="PTHR43198">
    <property type="entry name" value="BIFUNCTIONAL TH2 PROTEIN"/>
    <property type="match status" value="1"/>
</dbReference>
<dbReference type="PANTHER" id="PTHR43198:SF2">
    <property type="entry name" value="SI:CH1073-67J19.1-RELATED"/>
    <property type="match status" value="1"/>
</dbReference>
<dbReference type="Pfam" id="PF03070">
    <property type="entry name" value="TENA_THI-4"/>
    <property type="match status" value="1"/>
</dbReference>
<dbReference type="SUPFAM" id="SSF48613">
    <property type="entry name" value="Heme oxygenase-like"/>
    <property type="match status" value="1"/>
</dbReference>
<evidence type="ECO:0000250" key="1">
    <source>
        <dbReference type="UniProtKB" id="P25052"/>
    </source>
</evidence>
<evidence type="ECO:0000250" key="2">
    <source>
        <dbReference type="UniProtKB" id="Q6GEY1"/>
    </source>
</evidence>
<evidence type="ECO:0000305" key="3"/>
<reference key="1">
    <citation type="journal article" date="2005" name="Proc. Natl. Acad. Sci. U.S.A.">
        <title>Whole genome sequence of Staphylococcus saprophyticus reveals the pathogenesis of uncomplicated urinary tract infection.</title>
        <authorList>
            <person name="Kuroda M."/>
            <person name="Yamashita A."/>
            <person name="Hirakawa H."/>
            <person name="Kumano M."/>
            <person name="Morikawa K."/>
            <person name="Higashide M."/>
            <person name="Maruyama A."/>
            <person name="Inose Y."/>
            <person name="Matoba K."/>
            <person name="Toh H."/>
            <person name="Kuhara S."/>
            <person name="Hattori M."/>
            <person name="Ohta T."/>
        </authorList>
    </citation>
    <scope>NUCLEOTIDE SEQUENCE [LARGE SCALE GENOMIC DNA]</scope>
    <source>
        <strain>ATCC 15305 / DSM 20229 / NCIMB 8711 / NCTC 7292 / S-41</strain>
    </source>
</reference>
<name>TENA_STAS1</name>
<keyword id="KW-0378">Hydrolase</keyword>
<keyword id="KW-1185">Reference proteome</keyword>
<keyword id="KW-0784">Thiamine biosynthesis</keyword>